<feature type="chain" id="PRO_0000201886" description="Multidrug resistance protein MdtN">
    <location>
        <begin position="1"/>
        <end position="343"/>
    </location>
</feature>
<feature type="topological domain" description="Cytoplasmic" evidence="2">
    <location>
        <begin position="1"/>
        <end position="12"/>
    </location>
</feature>
<feature type="transmembrane region" description="Helical; Signal-anchor for type II membrane protein" evidence="2">
    <location>
        <begin position="13"/>
        <end position="33"/>
    </location>
</feature>
<feature type="topological domain" description="Periplasmic" evidence="2">
    <location>
        <begin position="34"/>
        <end position="343"/>
    </location>
</feature>
<reference key="1">
    <citation type="journal article" date="2002" name="Nucleic Acids Res.">
        <title>Genome sequence of Shigella flexneri 2a: insights into pathogenicity through comparison with genomes of Escherichia coli K12 and O157.</title>
        <authorList>
            <person name="Jin Q."/>
            <person name="Yuan Z."/>
            <person name="Xu J."/>
            <person name="Wang Y."/>
            <person name="Shen Y."/>
            <person name="Lu W."/>
            <person name="Wang J."/>
            <person name="Liu H."/>
            <person name="Yang J."/>
            <person name="Yang F."/>
            <person name="Zhang X."/>
            <person name="Zhang J."/>
            <person name="Yang G."/>
            <person name="Wu H."/>
            <person name="Qu D."/>
            <person name="Dong J."/>
            <person name="Sun L."/>
            <person name="Xue Y."/>
            <person name="Zhao A."/>
            <person name="Gao Y."/>
            <person name="Zhu J."/>
            <person name="Kan B."/>
            <person name="Ding K."/>
            <person name="Chen S."/>
            <person name="Cheng H."/>
            <person name="Yao Z."/>
            <person name="He B."/>
            <person name="Chen R."/>
            <person name="Ma D."/>
            <person name="Qiang B."/>
            <person name="Wen Y."/>
            <person name="Hou Y."/>
            <person name="Yu J."/>
        </authorList>
    </citation>
    <scope>NUCLEOTIDE SEQUENCE [LARGE SCALE GENOMIC DNA]</scope>
    <source>
        <strain>301 / Serotype 2a</strain>
    </source>
</reference>
<reference key="2">
    <citation type="journal article" date="2003" name="Infect. Immun.">
        <title>Complete genome sequence and comparative genomics of Shigella flexneri serotype 2a strain 2457T.</title>
        <authorList>
            <person name="Wei J."/>
            <person name="Goldberg M.B."/>
            <person name="Burland V."/>
            <person name="Venkatesan M.M."/>
            <person name="Deng W."/>
            <person name="Fournier G."/>
            <person name="Mayhew G.F."/>
            <person name="Plunkett G. III"/>
            <person name="Rose D.J."/>
            <person name="Darling A."/>
            <person name="Mau B."/>
            <person name="Perna N.T."/>
            <person name="Payne S.M."/>
            <person name="Runyen-Janecky L.J."/>
            <person name="Zhou S."/>
            <person name="Schwartz D.C."/>
            <person name="Blattner F.R."/>
        </authorList>
    </citation>
    <scope>NUCLEOTIDE SEQUENCE [LARGE SCALE GENOMIC DNA]</scope>
    <source>
        <strain>ATCC 700930 / 2457T / Serotype 2a</strain>
    </source>
</reference>
<gene>
    <name type="primary">mdtN</name>
    <name type="ordered locus">SF4142</name>
    <name type="ordered locus">S3608</name>
</gene>
<comment type="function">
    <text evidence="1">Could be involved in resistance to puromycin, acriflavine and tetraphenylarsonium chloride.</text>
</comment>
<comment type="subunit">
    <text evidence="1">Could be part of a tripartite efflux system composed of MdtN, MdtO and MdtP.</text>
</comment>
<comment type="subcellular location">
    <subcellularLocation>
        <location evidence="3">Cell inner membrane</location>
        <topology evidence="3">Single-pass type II membrane protein</topology>
    </subcellularLocation>
</comment>
<comment type="similarity">
    <text evidence="3">Belongs to the membrane fusion protein (MFP) (TC 8.A.1) family.</text>
</comment>
<dbReference type="EMBL" id="AE005674">
    <property type="protein sequence ID" value="AAN45564.2"/>
    <property type="molecule type" value="Genomic_DNA"/>
</dbReference>
<dbReference type="EMBL" id="AE014073">
    <property type="protein sequence ID" value="AAP18652.1"/>
    <property type="molecule type" value="Genomic_DNA"/>
</dbReference>
<dbReference type="RefSeq" id="WP_000446384.1">
    <property type="nucleotide sequence ID" value="NZ_WPGW01000075.1"/>
</dbReference>
<dbReference type="SMR" id="Q83P86"/>
<dbReference type="STRING" id="198214.SF4142"/>
<dbReference type="PaxDb" id="198214-SF4142"/>
<dbReference type="KEGG" id="sfl:SF4142"/>
<dbReference type="KEGG" id="sfx:S3608"/>
<dbReference type="PATRIC" id="fig|198214.7.peg.4889"/>
<dbReference type="HOGENOM" id="CLU_018816_15_2_6"/>
<dbReference type="Proteomes" id="UP000001006">
    <property type="component" value="Chromosome"/>
</dbReference>
<dbReference type="Proteomes" id="UP000002673">
    <property type="component" value="Chromosome"/>
</dbReference>
<dbReference type="GO" id="GO:0005886">
    <property type="term" value="C:plasma membrane"/>
    <property type="evidence" value="ECO:0007669"/>
    <property type="project" value="UniProtKB-SubCell"/>
</dbReference>
<dbReference type="GO" id="GO:0042910">
    <property type="term" value="F:xenobiotic transmembrane transporter activity"/>
    <property type="evidence" value="ECO:0007669"/>
    <property type="project" value="InterPro"/>
</dbReference>
<dbReference type="GO" id="GO:0046677">
    <property type="term" value="P:response to antibiotic"/>
    <property type="evidence" value="ECO:0007669"/>
    <property type="project" value="UniProtKB-KW"/>
</dbReference>
<dbReference type="GO" id="GO:1990961">
    <property type="term" value="P:xenobiotic detoxification by transmembrane export across the plasma membrane"/>
    <property type="evidence" value="ECO:0007669"/>
    <property type="project" value="InterPro"/>
</dbReference>
<dbReference type="FunFam" id="2.40.30.170:FF:000008">
    <property type="entry name" value="Multidrug resistance protein MdtN"/>
    <property type="match status" value="1"/>
</dbReference>
<dbReference type="Gene3D" id="2.40.30.170">
    <property type="match status" value="1"/>
</dbReference>
<dbReference type="Gene3D" id="2.40.50.100">
    <property type="match status" value="1"/>
</dbReference>
<dbReference type="Gene3D" id="1.10.287.470">
    <property type="entry name" value="Helix hairpin bin"/>
    <property type="match status" value="1"/>
</dbReference>
<dbReference type="InterPro" id="IPR043602">
    <property type="entry name" value="CusB-like_dom_1"/>
</dbReference>
<dbReference type="InterPro" id="IPR032317">
    <property type="entry name" value="CusB_D23"/>
</dbReference>
<dbReference type="InterPro" id="IPR050393">
    <property type="entry name" value="MFP_Efflux_Pump"/>
</dbReference>
<dbReference type="InterPro" id="IPR005694">
    <property type="entry name" value="MFP_proteobact"/>
</dbReference>
<dbReference type="NCBIfam" id="TIGR00998">
    <property type="entry name" value="8a0101"/>
    <property type="match status" value="1"/>
</dbReference>
<dbReference type="NCBIfam" id="NF007785">
    <property type="entry name" value="PRK10476.1"/>
    <property type="match status" value="1"/>
</dbReference>
<dbReference type="PANTHER" id="PTHR30367:SF1">
    <property type="entry name" value="MULTIDRUG RESISTANCE PROTEIN MDTN"/>
    <property type="match status" value="1"/>
</dbReference>
<dbReference type="PANTHER" id="PTHR30367">
    <property type="entry name" value="P-HYDROXYBENZOIC ACID EFFLUX PUMP SUBUNIT AAEA-RELATED"/>
    <property type="match status" value="1"/>
</dbReference>
<dbReference type="Pfam" id="PF00529">
    <property type="entry name" value="CusB_dom_1"/>
    <property type="match status" value="1"/>
</dbReference>
<dbReference type="Pfam" id="PF16576">
    <property type="entry name" value="HlyD_D23"/>
    <property type="match status" value="1"/>
</dbReference>
<dbReference type="SUPFAM" id="SSF111369">
    <property type="entry name" value="HlyD-like secretion proteins"/>
    <property type="match status" value="3"/>
</dbReference>
<evidence type="ECO:0000250" key="1"/>
<evidence type="ECO:0000255" key="2"/>
<evidence type="ECO:0000305" key="3"/>
<protein>
    <recommendedName>
        <fullName>Multidrug resistance protein MdtN</fullName>
    </recommendedName>
</protein>
<proteinExistence type="inferred from homology"/>
<keyword id="KW-0046">Antibiotic resistance</keyword>
<keyword id="KW-0997">Cell inner membrane</keyword>
<keyword id="KW-1003">Cell membrane</keyword>
<keyword id="KW-0472">Membrane</keyword>
<keyword id="KW-1185">Reference proteome</keyword>
<keyword id="KW-0735">Signal-anchor</keyword>
<keyword id="KW-0812">Transmembrane</keyword>
<keyword id="KW-1133">Transmembrane helix</keyword>
<keyword id="KW-0813">Transport</keyword>
<sequence length="343" mass="36952">MESTPKKAPRSKFPALLVVALALVALVFVIWRVDSAPSTNDAYASADTIDVVPEVSGRIVELAVTDNQAVKQGDLLFRIDPRPYEANLAKAEASLAALDKQIMLTQRSVDAQQFGADSVNATVEKARAAAKQATDTLRRTEPLLKEGFVSAEDVDRARTAQRAAEADLNAVLLQAQSAASAVSGVDALVAQRAAVEADIALTKLHLEMTTVRAPFDGRIISLKTSVGQFASAMRPIFTLIDTRHWYVIANFRETDLKNIRSGTPATIRLMSDSGKTFEGKVDSIGYGVLPDDGGLVLGGLPKVSRSINWVRVAQRFPVKIMVDKPDPEMFRIGASAVANLEPQ</sequence>
<name>MDTN_SHIFL</name>
<accession>Q83P86</accession>
<accession>Q7UBB7</accession>
<organism>
    <name type="scientific">Shigella flexneri</name>
    <dbReference type="NCBI Taxonomy" id="623"/>
    <lineage>
        <taxon>Bacteria</taxon>
        <taxon>Pseudomonadati</taxon>
        <taxon>Pseudomonadota</taxon>
        <taxon>Gammaproteobacteria</taxon>
        <taxon>Enterobacterales</taxon>
        <taxon>Enterobacteriaceae</taxon>
        <taxon>Shigella</taxon>
    </lineage>
</organism>